<proteinExistence type="inferred from homology"/>
<protein>
    <recommendedName>
        <fullName evidence="1">Glyoxylate/hydroxypyruvate reductase B</fullName>
        <ecNumber evidence="1">1.1.1.79</ecNumber>
        <ecNumber evidence="1">1.1.1.81</ecNumber>
    </recommendedName>
</protein>
<sequence>MKPSVILYKALPDDLLQRLQEHFTVHQVANLSPQTVEQNAAIFAEAEGLLGSNENVDAALLEKMPKLRATSTISVGYDNFDVDALTARKILLMHTPTVLTETVADTLMALVLSTARRVVEVAERVKAGEWTASIGPDWYGTDVHHKTLGIVGMGRIGMALAQRAHFGFNMPILYNARRHHKEAEERFNARYCDLDTLLQESDFVCLILPLTDETHHLFGAEQFAKMKSSAIFINAGRGPVVDENALIAALQKGEIHAAGLDVFEQEPLSVDSPLLSMANVVAVPHIGSATHETRYGMAACAVDNLIDALQGKVEKNCVNPHVAD</sequence>
<accession>B7MER0</accession>
<organism>
    <name type="scientific">Escherichia coli O45:K1 (strain S88 / ExPEC)</name>
    <dbReference type="NCBI Taxonomy" id="585035"/>
    <lineage>
        <taxon>Bacteria</taxon>
        <taxon>Pseudomonadati</taxon>
        <taxon>Pseudomonadota</taxon>
        <taxon>Gammaproteobacteria</taxon>
        <taxon>Enterobacterales</taxon>
        <taxon>Enterobacteriaceae</taxon>
        <taxon>Escherichia</taxon>
    </lineage>
</organism>
<comment type="function">
    <text evidence="1">Catalyzes the NADPH-dependent reduction of glyoxylate and hydroxypyruvate into glycolate and glycerate, respectively.</text>
</comment>
<comment type="catalytic activity">
    <reaction evidence="1">
        <text>glycolate + NADP(+) = glyoxylate + NADPH + H(+)</text>
        <dbReference type="Rhea" id="RHEA:10992"/>
        <dbReference type="ChEBI" id="CHEBI:15378"/>
        <dbReference type="ChEBI" id="CHEBI:29805"/>
        <dbReference type="ChEBI" id="CHEBI:36655"/>
        <dbReference type="ChEBI" id="CHEBI:57783"/>
        <dbReference type="ChEBI" id="CHEBI:58349"/>
        <dbReference type="EC" id="1.1.1.79"/>
    </reaction>
</comment>
<comment type="catalytic activity">
    <reaction evidence="1">
        <text>(R)-glycerate + NAD(+) = 3-hydroxypyruvate + NADH + H(+)</text>
        <dbReference type="Rhea" id="RHEA:17905"/>
        <dbReference type="ChEBI" id="CHEBI:15378"/>
        <dbReference type="ChEBI" id="CHEBI:16659"/>
        <dbReference type="ChEBI" id="CHEBI:17180"/>
        <dbReference type="ChEBI" id="CHEBI:57540"/>
        <dbReference type="ChEBI" id="CHEBI:57945"/>
        <dbReference type="EC" id="1.1.1.81"/>
    </reaction>
</comment>
<comment type="catalytic activity">
    <reaction evidence="1">
        <text>(R)-glycerate + NADP(+) = 3-hydroxypyruvate + NADPH + H(+)</text>
        <dbReference type="Rhea" id="RHEA:18657"/>
        <dbReference type="ChEBI" id="CHEBI:15378"/>
        <dbReference type="ChEBI" id="CHEBI:16659"/>
        <dbReference type="ChEBI" id="CHEBI:17180"/>
        <dbReference type="ChEBI" id="CHEBI:57783"/>
        <dbReference type="ChEBI" id="CHEBI:58349"/>
        <dbReference type="EC" id="1.1.1.81"/>
    </reaction>
</comment>
<comment type="subunit">
    <text evidence="1">Homodimer.</text>
</comment>
<comment type="subcellular location">
    <subcellularLocation>
        <location evidence="1">Cytoplasm</location>
    </subcellularLocation>
</comment>
<comment type="similarity">
    <text evidence="1">Belongs to the D-isomer specific 2-hydroxyacid dehydrogenase family. GhrB subfamily.</text>
</comment>
<keyword id="KW-0963">Cytoplasm</keyword>
<keyword id="KW-0520">NAD</keyword>
<keyword id="KW-0521">NADP</keyword>
<keyword id="KW-0560">Oxidoreductase</keyword>
<keyword id="KW-1185">Reference proteome</keyword>
<evidence type="ECO:0000255" key="1">
    <source>
        <dbReference type="HAMAP-Rule" id="MF_01667"/>
    </source>
</evidence>
<name>GHRB_ECO45</name>
<reference key="1">
    <citation type="journal article" date="2009" name="PLoS Genet.">
        <title>Organised genome dynamics in the Escherichia coli species results in highly diverse adaptive paths.</title>
        <authorList>
            <person name="Touchon M."/>
            <person name="Hoede C."/>
            <person name="Tenaillon O."/>
            <person name="Barbe V."/>
            <person name="Baeriswyl S."/>
            <person name="Bidet P."/>
            <person name="Bingen E."/>
            <person name="Bonacorsi S."/>
            <person name="Bouchier C."/>
            <person name="Bouvet O."/>
            <person name="Calteau A."/>
            <person name="Chiapello H."/>
            <person name="Clermont O."/>
            <person name="Cruveiller S."/>
            <person name="Danchin A."/>
            <person name="Diard M."/>
            <person name="Dossat C."/>
            <person name="Karoui M.E."/>
            <person name="Frapy E."/>
            <person name="Garry L."/>
            <person name="Ghigo J.M."/>
            <person name="Gilles A.M."/>
            <person name="Johnson J."/>
            <person name="Le Bouguenec C."/>
            <person name="Lescat M."/>
            <person name="Mangenot S."/>
            <person name="Martinez-Jehanne V."/>
            <person name="Matic I."/>
            <person name="Nassif X."/>
            <person name="Oztas S."/>
            <person name="Petit M.A."/>
            <person name="Pichon C."/>
            <person name="Rouy Z."/>
            <person name="Ruf C.S."/>
            <person name="Schneider D."/>
            <person name="Tourret J."/>
            <person name="Vacherie B."/>
            <person name="Vallenet D."/>
            <person name="Medigue C."/>
            <person name="Rocha E.P.C."/>
            <person name="Denamur E."/>
        </authorList>
    </citation>
    <scope>NUCLEOTIDE SEQUENCE [LARGE SCALE GENOMIC DNA]</scope>
    <source>
        <strain>S88 / ExPEC</strain>
    </source>
</reference>
<dbReference type="EC" id="1.1.1.79" evidence="1"/>
<dbReference type="EC" id="1.1.1.81" evidence="1"/>
<dbReference type="EMBL" id="CU928161">
    <property type="protein sequence ID" value="CAR05181.1"/>
    <property type="molecule type" value="Genomic_DNA"/>
</dbReference>
<dbReference type="RefSeq" id="WP_000805027.1">
    <property type="nucleotide sequence ID" value="NC_011742.1"/>
</dbReference>
<dbReference type="SMR" id="B7MER0"/>
<dbReference type="GeneID" id="75203026"/>
<dbReference type="KEGG" id="ecz:ECS88_3972"/>
<dbReference type="HOGENOM" id="CLU_019796_1_2_6"/>
<dbReference type="Proteomes" id="UP000000747">
    <property type="component" value="Chromosome"/>
</dbReference>
<dbReference type="GO" id="GO:0005829">
    <property type="term" value="C:cytosol"/>
    <property type="evidence" value="ECO:0007669"/>
    <property type="project" value="TreeGrafter"/>
</dbReference>
<dbReference type="GO" id="GO:0005886">
    <property type="term" value="C:plasma membrane"/>
    <property type="evidence" value="ECO:0007669"/>
    <property type="project" value="UniProtKB-UniRule"/>
</dbReference>
<dbReference type="GO" id="GO:0030267">
    <property type="term" value="F:glyoxylate reductase (NADPH) activity"/>
    <property type="evidence" value="ECO:0007669"/>
    <property type="project" value="UniProtKB-UniRule"/>
</dbReference>
<dbReference type="GO" id="GO:0008465">
    <property type="term" value="F:hydroxypyruvate reductase (NADH) activity"/>
    <property type="evidence" value="ECO:0007669"/>
    <property type="project" value="RHEA"/>
</dbReference>
<dbReference type="GO" id="GO:0120509">
    <property type="term" value="F:hydroxypyruvate reductase (NADPH) activity"/>
    <property type="evidence" value="ECO:0007669"/>
    <property type="project" value="RHEA"/>
</dbReference>
<dbReference type="GO" id="GO:0051287">
    <property type="term" value="F:NAD binding"/>
    <property type="evidence" value="ECO:0007669"/>
    <property type="project" value="InterPro"/>
</dbReference>
<dbReference type="CDD" id="cd05301">
    <property type="entry name" value="GDH"/>
    <property type="match status" value="1"/>
</dbReference>
<dbReference type="FunFam" id="3.40.50.720:FF:000026">
    <property type="entry name" value="Glyoxylate/hydroxypyruvate reductase B"/>
    <property type="match status" value="1"/>
</dbReference>
<dbReference type="Gene3D" id="3.40.50.720">
    <property type="entry name" value="NAD(P)-binding Rossmann-like Domain"/>
    <property type="match status" value="2"/>
</dbReference>
<dbReference type="HAMAP" id="MF_01667">
    <property type="entry name" value="2_Hacid_dh_C_GhrB"/>
    <property type="match status" value="1"/>
</dbReference>
<dbReference type="InterPro" id="IPR050223">
    <property type="entry name" value="D-isomer_2-hydroxyacid_DH"/>
</dbReference>
<dbReference type="InterPro" id="IPR006139">
    <property type="entry name" value="D-isomer_2_OHA_DH_cat_dom"/>
</dbReference>
<dbReference type="InterPro" id="IPR029753">
    <property type="entry name" value="D-isomer_DH_CS"/>
</dbReference>
<dbReference type="InterPro" id="IPR006140">
    <property type="entry name" value="D-isomer_DH_NAD-bd"/>
</dbReference>
<dbReference type="InterPro" id="IPR023756">
    <property type="entry name" value="Glyo/OHPyrv_Rdtase_B"/>
</dbReference>
<dbReference type="InterPro" id="IPR036291">
    <property type="entry name" value="NAD(P)-bd_dom_sf"/>
</dbReference>
<dbReference type="NCBIfam" id="NF011938">
    <property type="entry name" value="PRK15409.1"/>
    <property type="match status" value="1"/>
</dbReference>
<dbReference type="PANTHER" id="PTHR10996">
    <property type="entry name" value="2-HYDROXYACID DEHYDROGENASE-RELATED"/>
    <property type="match status" value="1"/>
</dbReference>
<dbReference type="PANTHER" id="PTHR10996:SF283">
    <property type="entry name" value="GLYOXYLATE_HYDROXYPYRUVATE REDUCTASE B"/>
    <property type="match status" value="1"/>
</dbReference>
<dbReference type="Pfam" id="PF00389">
    <property type="entry name" value="2-Hacid_dh"/>
    <property type="match status" value="1"/>
</dbReference>
<dbReference type="Pfam" id="PF02826">
    <property type="entry name" value="2-Hacid_dh_C"/>
    <property type="match status" value="1"/>
</dbReference>
<dbReference type="SUPFAM" id="SSF52283">
    <property type="entry name" value="Formate/glycerate dehydrogenase catalytic domain-like"/>
    <property type="match status" value="1"/>
</dbReference>
<dbReference type="SUPFAM" id="SSF51735">
    <property type="entry name" value="NAD(P)-binding Rossmann-fold domains"/>
    <property type="match status" value="1"/>
</dbReference>
<dbReference type="PROSITE" id="PS00670">
    <property type="entry name" value="D_2_HYDROXYACID_DH_2"/>
    <property type="match status" value="1"/>
</dbReference>
<dbReference type="PROSITE" id="PS00671">
    <property type="entry name" value="D_2_HYDROXYACID_DH_3"/>
    <property type="match status" value="1"/>
</dbReference>
<feature type="chain" id="PRO_1000187283" description="Glyoxylate/hydroxypyruvate reductase B">
    <location>
        <begin position="1"/>
        <end position="324"/>
    </location>
</feature>
<feature type="active site" evidence="1">
    <location>
        <position position="237"/>
    </location>
</feature>
<feature type="active site" evidence="1">
    <location>
        <position position="266"/>
    </location>
</feature>
<feature type="active site" description="Proton donor" evidence="1">
    <location>
        <position position="285"/>
    </location>
</feature>
<gene>
    <name evidence="1" type="primary">ghrB</name>
    <name type="ordered locus">ECS88_3972</name>
</gene>